<sequence length="244" mass="26254">MATRLQYENSCDVGVFLKLTNKYCLVGQCGSKQFLHTVENRLADHIPVVETSIAGTRIVGRLSAGNKNGLLLPNTCTDQELQQIRNSLPDDVVVQRIEEKFSALGNCIATNDYVALVHPDIDRETEEIIADVLGVEVFRQTVSGNVLVGTYCALTNQGALVHPMTSIADQDELSSLLQVPLVAGTVNRGNECVAAGCVVNDWTAIVGADTTATEISVIESIFALQGSKPSNIINNIRNSIVDNV</sequence>
<name>IF6_DICDI</name>
<reference key="1">
    <citation type="journal article" date="2002" name="Nature">
        <title>Sequence and analysis of chromosome 2 of Dictyostelium discoideum.</title>
        <authorList>
            <person name="Gloeckner G."/>
            <person name="Eichinger L."/>
            <person name="Szafranski K."/>
            <person name="Pachebat J.A."/>
            <person name="Bankier A.T."/>
            <person name="Dear P.H."/>
            <person name="Lehmann R."/>
            <person name="Baumgart C."/>
            <person name="Parra G."/>
            <person name="Abril J.F."/>
            <person name="Guigo R."/>
            <person name="Kumpf K."/>
            <person name="Tunggal B."/>
            <person name="Cox E.C."/>
            <person name="Quail M.A."/>
            <person name="Platzer M."/>
            <person name="Rosenthal A."/>
            <person name="Noegel A.A."/>
        </authorList>
    </citation>
    <scope>NUCLEOTIDE SEQUENCE [LARGE SCALE GENOMIC DNA]</scope>
    <source>
        <strain>AX4</strain>
    </source>
</reference>
<reference key="2">
    <citation type="journal article" date="2005" name="Nature">
        <title>The genome of the social amoeba Dictyostelium discoideum.</title>
        <authorList>
            <person name="Eichinger L."/>
            <person name="Pachebat J.A."/>
            <person name="Gloeckner G."/>
            <person name="Rajandream M.A."/>
            <person name="Sucgang R."/>
            <person name="Berriman M."/>
            <person name="Song J."/>
            <person name="Olsen R."/>
            <person name="Szafranski K."/>
            <person name="Xu Q."/>
            <person name="Tunggal B."/>
            <person name="Kummerfeld S."/>
            <person name="Madera M."/>
            <person name="Konfortov B.A."/>
            <person name="Rivero F."/>
            <person name="Bankier A.T."/>
            <person name="Lehmann R."/>
            <person name="Hamlin N."/>
            <person name="Davies R."/>
            <person name="Gaudet P."/>
            <person name="Fey P."/>
            <person name="Pilcher K."/>
            <person name="Chen G."/>
            <person name="Saunders D."/>
            <person name="Sodergren E.J."/>
            <person name="Davis P."/>
            <person name="Kerhornou A."/>
            <person name="Nie X."/>
            <person name="Hall N."/>
            <person name="Anjard C."/>
            <person name="Hemphill L."/>
            <person name="Bason N."/>
            <person name="Farbrother P."/>
            <person name="Desany B."/>
            <person name="Just E."/>
            <person name="Morio T."/>
            <person name="Rost R."/>
            <person name="Churcher C.M."/>
            <person name="Cooper J."/>
            <person name="Haydock S."/>
            <person name="van Driessche N."/>
            <person name="Cronin A."/>
            <person name="Goodhead I."/>
            <person name="Muzny D.M."/>
            <person name="Mourier T."/>
            <person name="Pain A."/>
            <person name="Lu M."/>
            <person name="Harper D."/>
            <person name="Lindsay R."/>
            <person name="Hauser H."/>
            <person name="James K.D."/>
            <person name="Quiles M."/>
            <person name="Madan Babu M."/>
            <person name="Saito T."/>
            <person name="Buchrieser C."/>
            <person name="Wardroper A."/>
            <person name="Felder M."/>
            <person name="Thangavelu M."/>
            <person name="Johnson D."/>
            <person name="Knights A."/>
            <person name="Loulseged H."/>
            <person name="Mungall K.L."/>
            <person name="Oliver K."/>
            <person name="Price C."/>
            <person name="Quail M.A."/>
            <person name="Urushihara H."/>
            <person name="Hernandez J."/>
            <person name="Rabbinowitsch E."/>
            <person name="Steffen D."/>
            <person name="Sanders M."/>
            <person name="Ma J."/>
            <person name="Kohara Y."/>
            <person name="Sharp S."/>
            <person name="Simmonds M.N."/>
            <person name="Spiegler S."/>
            <person name="Tivey A."/>
            <person name="Sugano S."/>
            <person name="White B."/>
            <person name="Walker D."/>
            <person name="Woodward J.R."/>
            <person name="Winckler T."/>
            <person name="Tanaka Y."/>
            <person name="Shaulsky G."/>
            <person name="Schleicher M."/>
            <person name="Weinstock G.M."/>
            <person name="Rosenthal A."/>
            <person name="Cox E.C."/>
            <person name="Chisholm R.L."/>
            <person name="Gibbs R.A."/>
            <person name="Loomis W.F."/>
            <person name="Platzer M."/>
            <person name="Kay R.R."/>
            <person name="Williams J.G."/>
            <person name="Dear P.H."/>
            <person name="Noegel A.A."/>
            <person name="Barrell B.G."/>
            <person name="Kuspa A."/>
        </authorList>
    </citation>
    <scope>NUCLEOTIDE SEQUENCE [LARGE SCALE GENOMIC DNA]</scope>
    <source>
        <strain>AX4</strain>
    </source>
</reference>
<gene>
    <name type="primary">eif6</name>
    <name type="ORF">DDB_G0276493</name>
</gene>
<accession>Q551M2</accession>
<proteinExistence type="evidence at protein level"/>
<protein>
    <recommendedName>
        <fullName evidence="1">Eukaryotic translation initiation factor 6</fullName>
        <shortName evidence="1">eIF-6</shortName>
    </recommendedName>
</protein>
<organism>
    <name type="scientific">Dictyostelium discoideum</name>
    <name type="common">Social amoeba</name>
    <dbReference type="NCBI Taxonomy" id="44689"/>
    <lineage>
        <taxon>Eukaryota</taxon>
        <taxon>Amoebozoa</taxon>
        <taxon>Evosea</taxon>
        <taxon>Eumycetozoa</taxon>
        <taxon>Dictyostelia</taxon>
        <taxon>Dictyosteliales</taxon>
        <taxon>Dictyosteliaceae</taxon>
        <taxon>Dictyostelium</taxon>
    </lineage>
</organism>
<feature type="chain" id="PRO_0000320058" description="Eukaryotic translation initiation factor 6">
    <location>
        <begin position="1"/>
        <end position="244"/>
    </location>
</feature>
<feature type="strand" evidence="2">
    <location>
        <begin position="2"/>
        <end position="4"/>
    </location>
</feature>
<feature type="strand" evidence="2">
    <location>
        <begin position="14"/>
        <end position="19"/>
    </location>
</feature>
<feature type="strand" evidence="2">
    <location>
        <begin position="24"/>
        <end position="26"/>
    </location>
</feature>
<feature type="helix" evidence="2">
    <location>
        <begin position="32"/>
        <end position="40"/>
    </location>
</feature>
<feature type="strand" evidence="2">
    <location>
        <begin position="44"/>
        <end position="46"/>
    </location>
</feature>
<feature type="turn" evidence="2">
    <location>
        <begin position="60"/>
        <end position="62"/>
    </location>
</feature>
<feature type="strand" evidence="2">
    <location>
        <begin position="67"/>
        <end position="72"/>
    </location>
</feature>
<feature type="helix" evidence="2">
    <location>
        <begin position="78"/>
        <end position="87"/>
    </location>
</feature>
<feature type="strand" evidence="2">
    <location>
        <begin position="90"/>
        <end position="96"/>
    </location>
</feature>
<feature type="strand" evidence="2">
    <location>
        <begin position="104"/>
        <end position="107"/>
    </location>
</feature>
<feature type="strand" evidence="2">
    <location>
        <begin position="112"/>
        <end position="116"/>
    </location>
</feature>
<feature type="helix" evidence="2">
    <location>
        <begin position="123"/>
        <end position="133"/>
    </location>
</feature>
<feature type="strand" evidence="2">
    <location>
        <begin position="135"/>
        <end position="137"/>
    </location>
</feature>
<feature type="turn" evidence="2">
    <location>
        <begin position="149"/>
        <end position="151"/>
    </location>
</feature>
<feature type="strand" evidence="2">
    <location>
        <begin position="152"/>
        <end position="154"/>
    </location>
</feature>
<feature type="strand" evidence="2">
    <location>
        <begin position="159"/>
        <end position="161"/>
    </location>
</feature>
<feature type="helix" evidence="2">
    <location>
        <begin position="167"/>
        <end position="177"/>
    </location>
</feature>
<feature type="strand" evidence="2">
    <location>
        <begin position="186"/>
        <end position="189"/>
    </location>
</feature>
<feature type="helix" evidence="2">
    <location>
        <begin position="193"/>
        <end position="196"/>
    </location>
</feature>
<feature type="strand" evidence="2">
    <location>
        <begin position="197"/>
        <end position="199"/>
    </location>
</feature>
<feature type="strand" evidence="2">
    <location>
        <begin position="204"/>
        <end position="206"/>
    </location>
</feature>
<feature type="helix" evidence="2">
    <location>
        <begin position="212"/>
        <end position="222"/>
    </location>
</feature>
<keyword id="KW-0002">3D-structure</keyword>
<keyword id="KW-0963">Cytoplasm</keyword>
<keyword id="KW-0396">Initiation factor</keyword>
<keyword id="KW-0539">Nucleus</keyword>
<keyword id="KW-0648">Protein biosynthesis</keyword>
<keyword id="KW-1185">Reference proteome</keyword>
<keyword id="KW-0690">Ribosome biogenesis</keyword>
<dbReference type="EMBL" id="AAFI02000015">
    <property type="protein sequence ID" value="EAL69200.1"/>
    <property type="molecule type" value="Genomic_DNA"/>
</dbReference>
<dbReference type="RefSeq" id="XP_643108.1">
    <property type="nucleotide sequence ID" value="XM_638016.1"/>
</dbReference>
<dbReference type="PDB" id="5AN9">
    <property type="method" value="EM"/>
    <property type="resolution" value="3.30 A"/>
    <property type="chains" value="I=1-224"/>
</dbReference>
<dbReference type="PDB" id="5ANB">
    <property type="method" value="EM"/>
    <property type="resolution" value="4.10 A"/>
    <property type="chains" value="I=1-224"/>
</dbReference>
<dbReference type="PDB" id="6QKL">
    <property type="method" value="EM"/>
    <property type="resolution" value="3.30 A"/>
    <property type="chains" value="I=1-224"/>
</dbReference>
<dbReference type="PDBsum" id="5AN9"/>
<dbReference type="PDBsum" id="5ANB"/>
<dbReference type="PDBsum" id="6QKL"/>
<dbReference type="EMDB" id="EMD-3145"/>
<dbReference type="EMDB" id="EMD-3146"/>
<dbReference type="SMR" id="Q551M2"/>
<dbReference type="FunCoup" id="Q551M2">
    <property type="interactions" value="840"/>
</dbReference>
<dbReference type="STRING" id="44689.Q551M2"/>
<dbReference type="PaxDb" id="44689-DDB0234038"/>
<dbReference type="EnsemblProtists" id="EAL69200">
    <property type="protein sequence ID" value="EAL69200"/>
    <property type="gene ID" value="DDB_G0276493"/>
</dbReference>
<dbReference type="GeneID" id="8620512"/>
<dbReference type="KEGG" id="ddi:DDB_G0276493"/>
<dbReference type="dictyBase" id="DDB_G0276493">
    <property type="gene designation" value="eIF6"/>
</dbReference>
<dbReference type="VEuPathDB" id="AmoebaDB:DDB_G0276493"/>
<dbReference type="eggNOG" id="KOG3185">
    <property type="taxonomic scope" value="Eukaryota"/>
</dbReference>
<dbReference type="HOGENOM" id="CLU_071894_0_0_1"/>
<dbReference type="InParanoid" id="Q551M2"/>
<dbReference type="OMA" id="WCAFCGM"/>
<dbReference type="PhylomeDB" id="Q551M2"/>
<dbReference type="EvolutionaryTrace" id="Q551M2"/>
<dbReference type="PRO" id="PR:Q551M2"/>
<dbReference type="Proteomes" id="UP000002195">
    <property type="component" value="Chromosome 2"/>
</dbReference>
<dbReference type="GO" id="GO:0005737">
    <property type="term" value="C:cytoplasm"/>
    <property type="evidence" value="ECO:0000314"/>
    <property type="project" value="dictyBase"/>
</dbReference>
<dbReference type="GO" id="GO:0005829">
    <property type="term" value="C:cytosol"/>
    <property type="evidence" value="ECO:0000318"/>
    <property type="project" value="GO_Central"/>
</dbReference>
<dbReference type="GO" id="GO:0005730">
    <property type="term" value="C:nucleolus"/>
    <property type="evidence" value="ECO:0000314"/>
    <property type="project" value="dictyBase"/>
</dbReference>
<dbReference type="GO" id="GO:0005634">
    <property type="term" value="C:nucleus"/>
    <property type="evidence" value="ECO:0000314"/>
    <property type="project" value="dictyBase"/>
</dbReference>
<dbReference type="GO" id="GO:0043023">
    <property type="term" value="F:ribosomal large subunit binding"/>
    <property type="evidence" value="ECO:0000314"/>
    <property type="project" value="dictyBase"/>
</dbReference>
<dbReference type="GO" id="GO:0003743">
    <property type="term" value="F:translation initiation factor activity"/>
    <property type="evidence" value="ECO:0007669"/>
    <property type="project" value="UniProtKB-UniRule"/>
</dbReference>
<dbReference type="GO" id="GO:1902626">
    <property type="term" value="P:assembly of large subunit precursor of preribosome"/>
    <property type="evidence" value="ECO:0000318"/>
    <property type="project" value="GO_Central"/>
</dbReference>
<dbReference type="GO" id="GO:0042256">
    <property type="term" value="P:cytosolic ribosome assembly"/>
    <property type="evidence" value="ECO:0007669"/>
    <property type="project" value="UniProtKB-UniRule"/>
</dbReference>
<dbReference type="GO" id="GO:0000460">
    <property type="term" value="P:maturation of 5.8S rRNA"/>
    <property type="evidence" value="ECO:0000318"/>
    <property type="project" value="GO_Central"/>
</dbReference>
<dbReference type="GO" id="GO:0000470">
    <property type="term" value="P:maturation of LSU-rRNA"/>
    <property type="evidence" value="ECO:0000318"/>
    <property type="project" value="GO_Central"/>
</dbReference>
<dbReference type="GO" id="GO:0042273">
    <property type="term" value="P:ribosomal large subunit biogenesis"/>
    <property type="evidence" value="ECO:0000250"/>
    <property type="project" value="dictyBase"/>
</dbReference>
<dbReference type="GO" id="GO:0000054">
    <property type="term" value="P:ribosomal subunit export from nucleus"/>
    <property type="evidence" value="ECO:0000318"/>
    <property type="project" value="GO_Central"/>
</dbReference>
<dbReference type="CDD" id="cd00527">
    <property type="entry name" value="IF6"/>
    <property type="match status" value="1"/>
</dbReference>
<dbReference type="FunFam" id="3.75.10.10:FF:000001">
    <property type="entry name" value="Eukaryotic translation initiation factor 6"/>
    <property type="match status" value="1"/>
</dbReference>
<dbReference type="Gene3D" id="3.75.10.10">
    <property type="entry name" value="L-arginine/glycine Amidinotransferase, Chain A"/>
    <property type="match status" value="1"/>
</dbReference>
<dbReference type="HAMAP" id="MF_00032">
    <property type="entry name" value="eIF_6"/>
    <property type="match status" value="1"/>
</dbReference>
<dbReference type="InterPro" id="IPR002769">
    <property type="entry name" value="eIF6"/>
</dbReference>
<dbReference type="NCBIfam" id="TIGR00323">
    <property type="entry name" value="eIF-6"/>
    <property type="match status" value="1"/>
</dbReference>
<dbReference type="PANTHER" id="PTHR10784">
    <property type="entry name" value="TRANSLATION INITIATION FACTOR 6"/>
    <property type="match status" value="1"/>
</dbReference>
<dbReference type="Pfam" id="PF01912">
    <property type="entry name" value="eIF-6"/>
    <property type="match status" value="1"/>
</dbReference>
<dbReference type="PIRSF" id="PIRSF006413">
    <property type="entry name" value="IF-6"/>
    <property type="match status" value="1"/>
</dbReference>
<dbReference type="SMART" id="SM00654">
    <property type="entry name" value="eIF6"/>
    <property type="match status" value="1"/>
</dbReference>
<dbReference type="SUPFAM" id="SSF55909">
    <property type="entry name" value="Pentein"/>
    <property type="match status" value="1"/>
</dbReference>
<comment type="function">
    <text evidence="1">Binds to the 60S ribosomal subunit and prevents its association with the 40S ribosomal subunit to form the 80S initiation complex in the cytoplasm. May also be involved in ribosome biogenesis.</text>
</comment>
<comment type="subunit">
    <text evidence="1">Monomer. Associates with the 60S ribosomal subunit.</text>
</comment>
<comment type="subcellular location">
    <subcellularLocation>
        <location evidence="1">Cytoplasm</location>
    </subcellularLocation>
    <subcellularLocation>
        <location evidence="1">Nucleus</location>
        <location evidence="1">Nucleolus</location>
    </subcellularLocation>
    <text evidence="1">Shuttles between cytoplasm and nucleus/nucleolus.</text>
</comment>
<comment type="similarity">
    <text evidence="1">Belongs to the eIF-6 family.</text>
</comment>
<evidence type="ECO:0000255" key="1">
    <source>
        <dbReference type="HAMAP-Rule" id="MF_03132"/>
    </source>
</evidence>
<evidence type="ECO:0007829" key="2">
    <source>
        <dbReference type="PDB" id="5AN9"/>
    </source>
</evidence>